<keyword id="KW-0025">Alternative splicing</keyword>
<keyword id="KW-0165">Cleavage on pair of basic residues</keyword>
<keyword id="KW-1015">Disulfide bond</keyword>
<keyword id="KW-0325">Glycoprotein</keyword>
<keyword id="KW-0378">Hydrolase</keyword>
<keyword id="KW-0479">Metal-binding</keyword>
<keyword id="KW-0482">Metalloprotease</keyword>
<keyword id="KW-0645">Protease</keyword>
<keyword id="KW-1185">Reference proteome</keyword>
<keyword id="KW-0964">Secreted</keyword>
<keyword id="KW-0732">Signal</keyword>
<keyword id="KW-0862">Zinc</keyword>
<keyword id="KW-0865">Zymogen</keyword>
<organism>
    <name type="scientific">Caenorhabditis elegans</name>
    <dbReference type="NCBI Taxonomy" id="6239"/>
    <lineage>
        <taxon>Eukaryota</taxon>
        <taxon>Metazoa</taxon>
        <taxon>Ecdysozoa</taxon>
        <taxon>Nematoda</taxon>
        <taxon>Chromadorea</taxon>
        <taxon>Rhabditida</taxon>
        <taxon>Rhabditina</taxon>
        <taxon>Rhabditomorpha</taxon>
        <taxon>Rhabditoidea</taxon>
        <taxon>Rhabditidae</taxon>
        <taxon>Peloderinae</taxon>
        <taxon>Caenorhabditis</taxon>
    </lineage>
</organism>
<name>NAS11_CAEEL</name>
<protein>
    <recommendedName>
        <fullName>Zinc metalloproteinase nas-11</fullName>
        <ecNumber evidence="1">3.4.24.-</ecNumber>
    </recommendedName>
    <alternativeName>
        <fullName>Nematode astacin 11</fullName>
    </alternativeName>
</protein>
<dbReference type="EC" id="3.4.24.-" evidence="1"/>
<dbReference type="EMBL" id="FO081325">
    <property type="protein sequence ID" value="CCD70792.1"/>
    <property type="molecule type" value="Genomic_DNA"/>
</dbReference>
<dbReference type="EMBL" id="FO081325">
    <property type="protein sequence ID" value="CCD70793.1"/>
    <property type="molecule type" value="Genomic_DNA"/>
</dbReference>
<dbReference type="PIR" id="T16617">
    <property type="entry name" value="T16617"/>
</dbReference>
<dbReference type="RefSeq" id="NP_001024789.1">
    <molecule id="Q21432-1"/>
    <property type="nucleotide sequence ID" value="NM_001029618.6"/>
</dbReference>
<dbReference type="RefSeq" id="NP_001024790.1">
    <molecule id="Q21432-2"/>
    <property type="nucleotide sequence ID" value="NM_001029619.7"/>
</dbReference>
<dbReference type="SMR" id="Q21432"/>
<dbReference type="BioGRID" id="45867">
    <property type="interactions" value="3"/>
</dbReference>
<dbReference type="DIP" id="DIP-24488N"/>
<dbReference type="FunCoup" id="Q21432">
    <property type="interactions" value="297"/>
</dbReference>
<dbReference type="STRING" id="6239.K11G12.1a.1"/>
<dbReference type="MEROPS" id="M12.A36"/>
<dbReference type="GlyCosmos" id="Q21432">
    <property type="glycosylation" value="2 sites, No reported glycans"/>
</dbReference>
<dbReference type="iPTMnet" id="Q21432"/>
<dbReference type="PaxDb" id="6239-K11G12.1a"/>
<dbReference type="PeptideAtlas" id="Q21432"/>
<dbReference type="EnsemblMetazoa" id="K11G12.1a.1">
    <molecule id="Q21432-1"/>
    <property type="protein sequence ID" value="K11G12.1a.1"/>
    <property type="gene ID" value="WBGene00003530"/>
</dbReference>
<dbReference type="EnsemblMetazoa" id="K11G12.1b.1">
    <molecule id="Q21432-2"/>
    <property type="protein sequence ID" value="K11G12.1b.1"/>
    <property type="gene ID" value="WBGene00003530"/>
</dbReference>
<dbReference type="GeneID" id="180938"/>
<dbReference type="KEGG" id="cel:CELE_K11G12.1"/>
<dbReference type="UCSC" id="K11G12.1b">
    <molecule id="Q21432-1"/>
    <property type="organism name" value="c. elegans"/>
</dbReference>
<dbReference type="AGR" id="WB:WBGene00003530"/>
<dbReference type="CTD" id="180938"/>
<dbReference type="WormBase" id="K11G12.1a">
    <molecule id="Q21432-1"/>
    <property type="protein sequence ID" value="CE36313"/>
    <property type="gene ID" value="WBGene00003530"/>
    <property type="gene designation" value="nas-11"/>
</dbReference>
<dbReference type="WormBase" id="K11G12.1b">
    <molecule id="Q21432-2"/>
    <property type="protein sequence ID" value="CE37260"/>
    <property type="gene ID" value="WBGene00003530"/>
    <property type="gene designation" value="nas-11"/>
</dbReference>
<dbReference type="eggNOG" id="KOG3714">
    <property type="taxonomic scope" value="Eukaryota"/>
</dbReference>
<dbReference type="HOGENOM" id="CLU_030134_0_0_1"/>
<dbReference type="InParanoid" id="Q21432"/>
<dbReference type="OMA" id="FITINWS"/>
<dbReference type="OrthoDB" id="291007at2759"/>
<dbReference type="PhylomeDB" id="Q21432"/>
<dbReference type="PRO" id="PR:Q21432"/>
<dbReference type="Proteomes" id="UP000001940">
    <property type="component" value="Chromosome X"/>
</dbReference>
<dbReference type="Bgee" id="WBGene00003530">
    <property type="expression patterns" value="Expressed in adult organism and 2 other cell types or tissues"/>
</dbReference>
<dbReference type="GO" id="GO:0005576">
    <property type="term" value="C:extracellular region"/>
    <property type="evidence" value="ECO:0007669"/>
    <property type="project" value="UniProtKB-SubCell"/>
</dbReference>
<dbReference type="GO" id="GO:0004222">
    <property type="term" value="F:metalloendopeptidase activity"/>
    <property type="evidence" value="ECO:0000318"/>
    <property type="project" value="GO_Central"/>
</dbReference>
<dbReference type="GO" id="GO:0008270">
    <property type="term" value="F:zinc ion binding"/>
    <property type="evidence" value="ECO:0007669"/>
    <property type="project" value="InterPro"/>
</dbReference>
<dbReference type="GO" id="GO:0006508">
    <property type="term" value="P:proteolysis"/>
    <property type="evidence" value="ECO:0007669"/>
    <property type="project" value="UniProtKB-KW"/>
</dbReference>
<dbReference type="CDD" id="cd04280">
    <property type="entry name" value="ZnMc_astacin_like"/>
    <property type="match status" value="1"/>
</dbReference>
<dbReference type="FunFam" id="1.10.10.1940:FF:000004">
    <property type="entry name" value="Metalloendopeptidase"/>
    <property type="match status" value="1"/>
</dbReference>
<dbReference type="Gene3D" id="1.10.10.1940">
    <property type="match status" value="1"/>
</dbReference>
<dbReference type="Gene3D" id="3.40.390.10">
    <property type="entry name" value="Collagenase (Catalytic Domain)"/>
    <property type="match status" value="1"/>
</dbReference>
<dbReference type="InterPro" id="IPR034035">
    <property type="entry name" value="Astacin-like_dom"/>
</dbReference>
<dbReference type="InterPro" id="IPR024079">
    <property type="entry name" value="MetalloPept_cat_dom_sf"/>
</dbReference>
<dbReference type="InterPro" id="IPR001506">
    <property type="entry name" value="Peptidase_M12A"/>
</dbReference>
<dbReference type="InterPro" id="IPR017368">
    <property type="entry name" value="Peptidase_M12A_astacin-9/10/11"/>
</dbReference>
<dbReference type="InterPro" id="IPR006026">
    <property type="entry name" value="Peptidase_Metallo"/>
</dbReference>
<dbReference type="InterPro" id="IPR003582">
    <property type="entry name" value="ShKT_dom"/>
</dbReference>
<dbReference type="PANTHER" id="PTHR10127">
    <property type="entry name" value="DISCOIDIN, CUB, EGF, LAMININ , AND ZINC METALLOPROTEASE DOMAIN CONTAINING"/>
    <property type="match status" value="1"/>
</dbReference>
<dbReference type="PANTHER" id="PTHR10127:SF830">
    <property type="entry name" value="ZINC METALLOPROTEINASE NAS-11"/>
    <property type="match status" value="1"/>
</dbReference>
<dbReference type="Pfam" id="PF01400">
    <property type="entry name" value="Astacin"/>
    <property type="match status" value="1"/>
</dbReference>
<dbReference type="Pfam" id="PF01549">
    <property type="entry name" value="ShK"/>
    <property type="match status" value="1"/>
</dbReference>
<dbReference type="PIRSF" id="PIRSF038055">
    <property type="entry name" value="Nas9/Nas10/Nas11"/>
    <property type="match status" value="1"/>
</dbReference>
<dbReference type="PRINTS" id="PR00480">
    <property type="entry name" value="ASTACIN"/>
</dbReference>
<dbReference type="SMART" id="SM00254">
    <property type="entry name" value="ShKT"/>
    <property type="match status" value="1"/>
</dbReference>
<dbReference type="SMART" id="SM00235">
    <property type="entry name" value="ZnMc"/>
    <property type="match status" value="1"/>
</dbReference>
<dbReference type="SUPFAM" id="SSF55486">
    <property type="entry name" value="Metalloproteases ('zincins'), catalytic domain"/>
    <property type="match status" value="1"/>
</dbReference>
<dbReference type="PROSITE" id="PS51864">
    <property type="entry name" value="ASTACIN"/>
    <property type="match status" value="1"/>
</dbReference>
<dbReference type="PROSITE" id="PS51670">
    <property type="entry name" value="SHKT"/>
    <property type="match status" value="1"/>
</dbReference>
<accession>Q21432</accession>
<accession>Q65ZJ6</accession>
<reference key="1">
    <citation type="journal article" date="1998" name="Science">
        <title>Genome sequence of the nematode C. elegans: a platform for investigating biology.</title>
        <authorList>
            <consortium name="The C. elegans sequencing consortium"/>
        </authorList>
    </citation>
    <scope>NUCLEOTIDE SEQUENCE [LARGE SCALE GENOMIC DNA]</scope>
    <scope>ALTERNATIVE SPLICING</scope>
    <source>
        <strain>Bristol N2</strain>
    </source>
</reference>
<reference key="2">
    <citation type="journal article" date="2003" name="Eur. J. Biochem.">
        <title>The astacin protein family in Caenorhabditis elegans.</title>
        <authorList>
            <person name="Moehrlen F."/>
            <person name="Hutter H."/>
            <person name="Zwilling R."/>
        </authorList>
    </citation>
    <scope>NOMENCLATURE</scope>
    <scope>DISRUPTION PHENOTYPE</scope>
</reference>
<reference key="3">
    <citation type="journal article" date="2007" name="Mol. Cell. Proteomics">
        <title>Proteomics reveals N-linked glycoprotein diversity in Caenorhabditis elegans and suggests an atypical translocation mechanism for integral membrane proteins.</title>
        <authorList>
            <person name="Kaji H."/>
            <person name="Kamiie J."/>
            <person name="Kawakami H."/>
            <person name="Kido K."/>
            <person name="Yamauchi Y."/>
            <person name="Shinkawa T."/>
            <person name="Taoka M."/>
            <person name="Takahashi N."/>
            <person name="Isobe T."/>
        </authorList>
    </citation>
    <scope>GLYCOSYLATION [LARGE SCALE ANALYSIS] AT ASN-256</scope>
    <scope>IDENTIFICATION BY MASS SPECTROMETRY</scope>
    <source>
        <strain>Bristol N2</strain>
    </source>
</reference>
<reference key="4">
    <citation type="journal article" date="2010" name="BMC Dev. Biol.">
        <title>Characterization of the astacin family of metalloproteases in C. elegans.</title>
        <authorList>
            <person name="Park J.O."/>
            <person name="Pan J."/>
            <person name="Moehrlen F."/>
            <person name="Schupp M.O."/>
            <person name="Johnsen R."/>
            <person name="Baillie D.L."/>
            <person name="Zapf R."/>
            <person name="Moerman D.G."/>
            <person name="Hutter H."/>
        </authorList>
    </citation>
    <scope>TISSUE SPECIFICITY</scope>
</reference>
<gene>
    <name type="primary">nas-11</name>
    <name type="ORF">K11G12.1</name>
</gene>
<sequence length="579" mass="65031">MTPSLVFLIVVIVVVEGQGWRPWDRFNHPGNFGNWGGNNWGTRQRNQEPHDIPPPVPPPGFRGNNDRFGGNIIKVVEIIDLGKSKNRGDILSDFKDVHKKHRHLGRKEWKGKVKQFCHRFPGHPNCRRGKVPDQKELEEMIGQFSKGGIGRFLKRVPKIYIEDPLARVDPKLKGFLENAGRGFGHVSSEHVNKLRDICKRRKCREQPESAKKTRELFTQKLADFETKIAGKDKTDSVQLRFDRTLQIKEALLEKGNLTADIVPVDNGVYDLDTMLTEEQANILLNELNKAGVGDDEIPLPDADTDDEDDDDSTNSASGAAPGSSRLKKSALYFEGNLIKKWDPSSPIRYVLDSSLEDLDKNDVRAAIYEIEKNTCIRFKELSSPPTGSHIVYYKVDSPTFCGLSYVGRADPANPVYLSFGCDNNKGVAIHETMHALGVAHQHLRNDRDQFITINWSNIDPQQYDAFVVVDSKLYTSYGVKYAYDSIMHYNGYTAAQNIAIPTMNPKTNSAVNLKVLGQRQKMGTTDIELLKKMYCQPGCDDKNVYCGAWALKDLCKNPGHDQYMAANCKKSCGLCAIGK</sequence>
<feature type="signal peptide" evidence="4">
    <location>
        <begin position="1"/>
        <end position="17"/>
    </location>
</feature>
<feature type="propeptide" id="PRO_0000442658" evidence="3">
    <location>
        <begin position="18"/>
        <end position="328"/>
    </location>
</feature>
<feature type="chain" id="PRO_0000028915" description="Zinc metalloproteinase nas-11">
    <location>
        <begin position="329"/>
        <end position="579"/>
    </location>
</feature>
<feature type="domain" description="Peptidase M12A" evidence="6">
    <location>
        <begin position="329"/>
        <end position="536"/>
    </location>
</feature>
<feature type="domain" description="ShKT" evidence="5">
    <location>
        <begin position="539"/>
        <end position="575"/>
    </location>
</feature>
<feature type="region of interest" description="Disordered" evidence="7">
    <location>
        <begin position="35"/>
        <end position="58"/>
    </location>
</feature>
<feature type="region of interest" description="Disordered" evidence="7">
    <location>
        <begin position="293"/>
        <end position="323"/>
    </location>
</feature>
<feature type="compositionally biased region" description="Acidic residues" evidence="7">
    <location>
        <begin position="293"/>
        <end position="312"/>
    </location>
</feature>
<feature type="active site" evidence="6">
    <location>
        <position position="431"/>
    </location>
</feature>
<feature type="binding site" evidence="6">
    <location>
        <position position="430"/>
    </location>
    <ligand>
        <name>Zn(2+)</name>
        <dbReference type="ChEBI" id="CHEBI:29105"/>
        <note>catalytic</note>
    </ligand>
</feature>
<feature type="binding site" evidence="6">
    <location>
        <position position="434"/>
    </location>
    <ligand>
        <name>Zn(2+)</name>
        <dbReference type="ChEBI" id="CHEBI:29105"/>
        <note>catalytic</note>
    </ligand>
</feature>
<feature type="binding site" evidence="6">
    <location>
        <position position="440"/>
    </location>
    <ligand>
        <name>Zn(2+)</name>
        <dbReference type="ChEBI" id="CHEBI:29105"/>
        <note>catalytic</note>
    </ligand>
</feature>
<feature type="glycosylation site" description="N-linked (GlcNAc...) asparagine" evidence="9">
    <location>
        <position position="256"/>
    </location>
</feature>
<feature type="glycosylation site" description="N-linked (GlcNAc...) asparagine" evidence="4">
    <location>
        <position position="454"/>
    </location>
</feature>
<feature type="disulfide bond" evidence="6">
    <location>
        <begin position="375"/>
        <end position="535"/>
    </location>
</feature>
<feature type="disulfide bond" evidence="6">
    <location>
        <begin position="401"/>
        <end position="421"/>
    </location>
</feature>
<feature type="disulfide bond" evidence="5">
    <location>
        <begin position="539"/>
        <end position="575"/>
    </location>
</feature>
<feature type="disulfide bond" evidence="5">
    <location>
        <begin position="546"/>
        <end position="568"/>
    </location>
</feature>
<feature type="disulfide bond" evidence="5">
    <location>
        <begin position="555"/>
        <end position="572"/>
    </location>
</feature>
<feature type="splice variant" id="VSP_012354" description="In isoform b." evidence="11">
    <original>FCGLSYVGRADPANPVYLSFGCDNNKGVAIHETMHALGVAHQHLRNDRDQFITINW</original>
    <variation>LTKELQFMKQCMRSELPISTFAMIVINLLLLIGVTLIHNNTMHLLWWIQNCTLHTE</variation>
    <location>
        <begin position="400"/>
        <end position="455"/>
    </location>
</feature>
<feature type="splice variant" id="VSP_012355" description="In isoform b." evidence="11">
    <location>
        <begin position="456"/>
        <end position="579"/>
    </location>
</feature>
<proteinExistence type="evidence at protein level"/>
<comment type="function">
    <text evidence="2">Metalloprotease.</text>
</comment>
<comment type="cofactor">
    <cofactor evidence="6">
        <name>Zn(2+)</name>
        <dbReference type="ChEBI" id="CHEBI:29105"/>
    </cofactor>
    <text evidence="6">Binds 1 zinc ion per subunit.</text>
</comment>
<comment type="subcellular location">
    <subcellularLocation>
        <location evidence="11">Secreted</location>
    </subcellularLocation>
</comment>
<comment type="alternative products">
    <event type="alternative splicing"/>
    <isoform>
        <id>Q21432-1</id>
        <name>a</name>
        <sequence type="displayed"/>
    </isoform>
    <isoform>
        <id>Q21432-2</id>
        <name>b</name>
        <sequence type="described" ref="VSP_012354 VSP_012355"/>
    </isoform>
</comment>
<comment type="tissue specificity">
    <text evidence="10">Expressed in the anterior part of the intestine, CEP neurons and to a lesser extent in hypodermis.</text>
</comment>
<comment type="disruption phenotype">
    <text evidence="8">Defects lead to retarded growth.</text>
</comment>
<evidence type="ECO:0000250" key="1">
    <source>
        <dbReference type="UniProtKB" id="A8Q2D1"/>
    </source>
</evidence>
<evidence type="ECO:0000250" key="2">
    <source>
        <dbReference type="UniProtKB" id="P07584"/>
    </source>
</evidence>
<evidence type="ECO:0000250" key="3">
    <source>
        <dbReference type="UniProtKB" id="P13497"/>
    </source>
</evidence>
<evidence type="ECO:0000255" key="4"/>
<evidence type="ECO:0000255" key="5">
    <source>
        <dbReference type="PROSITE-ProRule" id="PRU01005"/>
    </source>
</evidence>
<evidence type="ECO:0000255" key="6">
    <source>
        <dbReference type="PROSITE-ProRule" id="PRU01211"/>
    </source>
</evidence>
<evidence type="ECO:0000256" key="7">
    <source>
        <dbReference type="SAM" id="MobiDB-lite"/>
    </source>
</evidence>
<evidence type="ECO:0000269" key="8">
    <source>
    </source>
</evidence>
<evidence type="ECO:0000269" key="9">
    <source>
    </source>
</evidence>
<evidence type="ECO:0000269" key="10">
    <source>
    </source>
</evidence>
<evidence type="ECO:0000305" key="11"/>